<evidence type="ECO:0000250" key="1"/>
<evidence type="ECO:0000255" key="2"/>
<evidence type="ECO:0000255" key="3">
    <source>
        <dbReference type="PROSITE-ProRule" id="PRU00175"/>
    </source>
</evidence>
<evidence type="ECO:0000256" key="4">
    <source>
        <dbReference type="SAM" id="MobiDB-lite"/>
    </source>
</evidence>
<evidence type="ECO:0000305" key="5"/>
<name>ATL13_ARATH</name>
<dbReference type="EC" id="2.3.2.27" evidence="5"/>
<dbReference type="EMBL" id="AF160182">
    <property type="status" value="NOT_ANNOTATED_CDS"/>
    <property type="molecule type" value="Genomic_DNA"/>
</dbReference>
<dbReference type="EMBL" id="AL161577">
    <property type="protein sequence ID" value="CAB79758.1"/>
    <property type="status" value="ALT_INIT"/>
    <property type="molecule type" value="Genomic_DNA"/>
</dbReference>
<dbReference type="EMBL" id="CP002687">
    <property type="protein sequence ID" value="AEE85760.1"/>
    <property type="molecule type" value="Genomic_DNA"/>
</dbReference>
<dbReference type="EMBL" id="AY054187">
    <property type="protein sequence ID" value="AAL06848.1"/>
    <property type="molecule type" value="mRNA"/>
</dbReference>
<dbReference type="EMBL" id="AY103309">
    <property type="protein sequence ID" value="AAM65361.1"/>
    <property type="molecule type" value="mRNA"/>
</dbReference>
<dbReference type="PIR" id="E85355">
    <property type="entry name" value="E85355"/>
</dbReference>
<dbReference type="RefSeq" id="NP_567846.1">
    <property type="nucleotide sequence ID" value="NM_119186.3"/>
</dbReference>
<dbReference type="SMR" id="Q940Q4"/>
<dbReference type="BioGRID" id="14450">
    <property type="interactions" value="1"/>
</dbReference>
<dbReference type="FunCoup" id="Q940Q4">
    <property type="interactions" value="401"/>
</dbReference>
<dbReference type="STRING" id="3702.Q940Q4"/>
<dbReference type="iPTMnet" id="Q940Q4"/>
<dbReference type="PaxDb" id="3702-AT4G30400.1"/>
<dbReference type="ProteomicsDB" id="246552"/>
<dbReference type="EnsemblPlants" id="AT4G30400.1">
    <property type="protein sequence ID" value="AT4G30400.1"/>
    <property type="gene ID" value="AT4G30400"/>
</dbReference>
<dbReference type="GeneID" id="829163"/>
<dbReference type="Gramene" id="AT4G30400.1">
    <property type="protein sequence ID" value="AT4G30400.1"/>
    <property type="gene ID" value="AT4G30400"/>
</dbReference>
<dbReference type="KEGG" id="ath:AT4G30400"/>
<dbReference type="Araport" id="AT4G30400"/>
<dbReference type="TAIR" id="AT4G30400">
    <property type="gene designation" value="ATL13"/>
</dbReference>
<dbReference type="eggNOG" id="KOG0800">
    <property type="taxonomic scope" value="Eukaryota"/>
</dbReference>
<dbReference type="HOGENOM" id="CLU_034332_0_0_1"/>
<dbReference type="InParanoid" id="Q940Q4"/>
<dbReference type="OMA" id="WVFPEIK"/>
<dbReference type="PhylomeDB" id="Q940Q4"/>
<dbReference type="UniPathway" id="UPA00143"/>
<dbReference type="PRO" id="PR:Q940Q4"/>
<dbReference type="Proteomes" id="UP000006548">
    <property type="component" value="Chromosome 4"/>
</dbReference>
<dbReference type="ExpressionAtlas" id="Q940Q4">
    <property type="expression patterns" value="baseline and differential"/>
</dbReference>
<dbReference type="GO" id="GO:0005886">
    <property type="term" value="C:plasma membrane"/>
    <property type="evidence" value="ECO:0007005"/>
    <property type="project" value="TAIR"/>
</dbReference>
<dbReference type="GO" id="GO:0016740">
    <property type="term" value="F:transferase activity"/>
    <property type="evidence" value="ECO:0007669"/>
    <property type="project" value="UniProtKB-KW"/>
</dbReference>
<dbReference type="GO" id="GO:0008270">
    <property type="term" value="F:zinc ion binding"/>
    <property type="evidence" value="ECO:0007669"/>
    <property type="project" value="UniProtKB-KW"/>
</dbReference>
<dbReference type="GO" id="GO:0016567">
    <property type="term" value="P:protein ubiquitination"/>
    <property type="evidence" value="ECO:0007669"/>
    <property type="project" value="UniProtKB-UniPathway"/>
</dbReference>
<dbReference type="CDD" id="cd16461">
    <property type="entry name" value="RING-H2_EL5-like"/>
    <property type="match status" value="1"/>
</dbReference>
<dbReference type="FunFam" id="3.30.40.10:FF:000231">
    <property type="entry name" value="RING-H2 finger protein ATL46"/>
    <property type="match status" value="1"/>
</dbReference>
<dbReference type="Gene3D" id="3.30.40.10">
    <property type="entry name" value="Zinc/RING finger domain, C3HC4 (zinc finger)"/>
    <property type="match status" value="1"/>
</dbReference>
<dbReference type="InterPro" id="IPR001841">
    <property type="entry name" value="Znf_RING"/>
</dbReference>
<dbReference type="InterPro" id="IPR013083">
    <property type="entry name" value="Znf_RING/FYVE/PHD"/>
</dbReference>
<dbReference type="PANTHER" id="PTHR45768">
    <property type="entry name" value="E3 UBIQUITIN-PROTEIN LIGASE RNF13-LIKE"/>
    <property type="match status" value="1"/>
</dbReference>
<dbReference type="PANTHER" id="PTHR45768:SF10">
    <property type="entry name" value="RING-H2 FINGER PROTEIN ATL13-RELATED"/>
    <property type="match status" value="1"/>
</dbReference>
<dbReference type="Pfam" id="PF13639">
    <property type="entry name" value="zf-RING_2"/>
    <property type="match status" value="1"/>
</dbReference>
<dbReference type="SMART" id="SM00184">
    <property type="entry name" value="RING"/>
    <property type="match status" value="1"/>
</dbReference>
<dbReference type="SUPFAM" id="SSF57850">
    <property type="entry name" value="RING/U-box"/>
    <property type="match status" value="1"/>
</dbReference>
<dbReference type="PROSITE" id="PS50089">
    <property type="entry name" value="ZF_RING_2"/>
    <property type="match status" value="1"/>
</dbReference>
<accession>Q940Q4</accession>
<accession>Q9M0C0</accession>
<proteinExistence type="evidence at transcript level"/>
<organism>
    <name type="scientific">Arabidopsis thaliana</name>
    <name type="common">Mouse-ear cress</name>
    <dbReference type="NCBI Taxonomy" id="3702"/>
    <lineage>
        <taxon>Eukaryota</taxon>
        <taxon>Viridiplantae</taxon>
        <taxon>Streptophyta</taxon>
        <taxon>Embryophyta</taxon>
        <taxon>Tracheophyta</taxon>
        <taxon>Spermatophyta</taxon>
        <taxon>Magnoliopsida</taxon>
        <taxon>eudicotyledons</taxon>
        <taxon>Gunneridae</taxon>
        <taxon>Pentapetalae</taxon>
        <taxon>rosids</taxon>
        <taxon>malvids</taxon>
        <taxon>Brassicales</taxon>
        <taxon>Brassicaceae</taxon>
        <taxon>Camelineae</taxon>
        <taxon>Arabidopsis</taxon>
    </lineage>
</organism>
<comment type="catalytic activity">
    <reaction evidence="5">
        <text>S-ubiquitinyl-[E2 ubiquitin-conjugating enzyme]-L-cysteine + [acceptor protein]-L-lysine = [E2 ubiquitin-conjugating enzyme]-L-cysteine + N(6)-ubiquitinyl-[acceptor protein]-L-lysine.</text>
        <dbReference type="EC" id="2.3.2.27"/>
    </reaction>
</comment>
<comment type="pathway">
    <text>Protein modification; protein ubiquitination.</text>
</comment>
<comment type="subcellular location">
    <subcellularLocation>
        <location evidence="5">Membrane</location>
        <topology evidence="5">Single-pass membrane protein</topology>
    </subcellularLocation>
</comment>
<comment type="domain">
    <text evidence="1">The RING-type zinc finger domain mediates binding to an E2 ubiquitin-conjugating enzyme.</text>
</comment>
<comment type="similarity">
    <text evidence="5">Belongs to the RING-type zinc finger family. ATL subfamily.</text>
</comment>
<comment type="sequence caution" evidence="5">
    <conflict type="erroneous initiation">
        <sequence resource="EMBL-CDS" id="CAB79758"/>
    </conflict>
</comment>
<reference key="1">
    <citation type="journal article" date="1999" name="Nature">
        <title>Sequence and analysis of chromosome 4 of the plant Arabidopsis thaliana.</title>
        <authorList>
            <person name="Mayer K.F.X."/>
            <person name="Schueller C."/>
            <person name="Wambutt R."/>
            <person name="Murphy G."/>
            <person name="Volckaert G."/>
            <person name="Pohl T."/>
            <person name="Duesterhoeft A."/>
            <person name="Stiekema W."/>
            <person name="Entian K.-D."/>
            <person name="Terryn N."/>
            <person name="Harris B."/>
            <person name="Ansorge W."/>
            <person name="Brandt P."/>
            <person name="Grivell L.A."/>
            <person name="Rieger M."/>
            <person name="Weichselgartner M."/>
            <person name="de Simone V."/>
            <person name="Obermaier B."/>
            <person name="Mache R."/>
            <person name="Mueller M."/>
            <person name="Kreis M."/>
            <person name="Delseny M."/>
            <person name="Puigdomenech P."/>
            <person name="Watson M."/>
            <person name="Schmidtheini T."/>
            <person name="Reichert B."/>
            <person name="Portetelle D."/>
            <person name="Perez-Alonso M."/>
            <person name="Boutry M."/>
            <person name="Bancroft I."/>
            <person name="Vos P."/>
            <person name="Hoheisel J."/>
            <person name="Zimmermann W."/>
            <person name="Wedler H."/>
            <person name="Ridley P."/>
            <person name="Langham S.-A."/>
            <person name="McCullagh B."/>
            <person name="Bilham L."/>
            <person name="Robben J."/>
            <person name="van der Schueren J."/>
            <person name="Grymonprez B."/>
            <person name="Chuang Y.-J."/>
            <person name="Vandenbussche F."/>
            <person name="Braeken M."/>
            <person name="Weltjens I."/>
            <person name="Voet M."/>
            <person name="Bastiaens I."/>
            <person name="Aert R."/>
            <person name="Defoor E."/>
            <person name="Weitzenegger T."/>
            <person name="Bothe G."/>
            <person name="Ramsperger U."/>
            <person name="Hilbert H."/>
            <person name="Braun M."/>
            <person name="Holzer E."/>
            <person name="Brandt A."/>
            <person name="Peters S."/>
            <person name="van Staveren M."/>
            <person name="Dirkse W."/>
            <person name="Mooijman P."/>
            <person name="Klein Lankhorst R."/>
            <person name="Rose M."/>
            <person name="Hauf J."/>
            <person name="Koetter P."/>
            <person name="Berneiser S."/>
            <person name="Hempel S."/>
            <person name="Feldpausch M."/>
            <person name="Lamberth S."/>
            <person name="Van den Daele H."/>
            <person name="De Keyser A."/>
            <person name="Buysshaert C."/>
            <person name="Gielen J."/>
            <person name="Villarroel R."/>
            <person name="De Clercq R."/>
            <person name="van Montagu M."/>
            <person name="Rogers J."/>
            <person name="Cronin A."/>
            <person name="Quail M.A."/>
            <person name="Bray-Allen S."/>
            <person name="Clark L."/>
            <person name="Doggett J."/>
            <person name="Hall S."/>
            <person name="Kay M."/>
            <person name="Lennard N."/>
            <person name="McLay K."/>
            <person name="Mayes R."/>
            <person name="Pettett A."/>
            <person name="Rajandream M.A."/>
            <person name="Lyne M."/>
            <person name="Benes V."/>
            <person name="Rechmann S."/>
            <person name="Borkova D."/>
            <person name="Bloecker H."/>
            <person name="Scharfe M."/>
            <person name="Grimm M."/>
            <person name="Loehnert T.-H."/>
            <person name="Dose S."/>
            <person name="de Haan M."/>
            <person name="Maarse A.C."/>
            <person name="Schaefer M."/>
            <person name="Mueller-Auer S."/>
            <person name="Gabel C."/>
            <person name="Fuchs M."/>
            <person name="Fartmann B."/>
            <person name="Granderath K."/>
            <person name="Dauner D."/>
            <person name="Herzl A."/>
            <person name="Neumann S."/>
            <person name="Argiriou A."/>
            <person name="Vitale D."/>
            <person name="Liguori R."/>
            <person name="Piravandi E."/>
            <person name="Massenet O."/>
            <person name="Quigley F."/>
            <person name="Clabauld G."/>
            <person name="Muendlein A."/>
            <person name="Felber R."/>
            <person name="Schnabl S."/>
            <person name="Hiller R."/>
            <person name="Schmidt W."/>
            <person name="Lecharny A."/>
            <person name="Aubourg S."/>
            <person name="Chefdor F."/>
            <person name="Cooke R."/>
            <person name="Berger C."/>
            <person name="Monfort A."/>
            <person name="Casacuberta E."/>
            <person name="Gibbons T."/>
            <person name="Weber N."/>
            <person name="Vandenbol M."/>
            <person name="Bargues M."/>
            <person name="Terol J."/>
            <person name="Torres A."/>
            <person name="Perez-Perez A."/>
            <person name="Purnelle B."/>
            <person name="Bent E."/>
            <person name="Johnson S."/>
            <person name="Tacon D."/>
            <person name="Jesse T."/>
            <person name="Heijnen L."/>
            <person name="Schwarz S."/>
            <person name="Scholler P."/>
            <person name="Heber S."/>
            <person name="Francs P."/>
            <person name="Bielke C."/>
            <person name="Frishman D."/>
            <person name="Haase D."/>
            <person name="Lemcke K."/>
            <person name="Mewes H.-W."/>
            <person name="Stocker S."/>
            <person name="Zaccaria P."/>
            <person name="Bevan M."/>
            <person name="Wilson R.K."/>
            <person name="de la Bastide M."/>
            <person name="Habermann K."/>
            <person name="Parnell L."/>
            <person name="Dedhia N."/>
            <person name="Gnoj L."/>
            <person name="Schutz K."/>
            <person name="Huang E."/>
            <person name="Spiegel L."/>
            <person name="Sekhon M."/>
            <person name="Murray J."/>
            <person name="Sheet P."/>
            <person name="Cordes M."/>
            <person name="Abu-Threideh J."/>
            <person name="Stoneking T."/>
            <person name="Kalicki J."/>
            <person name="Graves T."/>
            <person name="Harmon G."/>
            <person name="Edwards J."/>
            <person name="Latreille P."/>
            <person name="Courtney L."/>
            <person name="Cloud J."/>
            <person name="Abbott A."/>
            <person name="Scott K."/>
            <person name="Johnson D."/>
            <person name="Minx P."/>
            <person name="Bentley D."/>
            <person name="Fulton B."/>
            <person name="Miller N."/>
            <person name="Greco T."/>
            <person name="Kemp K."/>
            <person name="Kramer J."/>
            <person name="Fulton L."/>
            <person name="Mardis E."/>
            <person name="Dante M."/>
            <person name="Pepin K."/>
            <person name="Hillier L.W."/>
            <person name="Nelson J."/>
            <person name="Spieth J."/>
            <person name="Ryan E."/>
            <person name="Andrews S."/>
            <person name="Geisel C."/>
            <person name="Layman D."/>
            <person name="Du H."/>
            <person name="Ali J."/>
            <person name="Berghoff A."/>
            <person name="Jones K."/>
            <person name="Drone K."/>
            <person name="Cotton M."/>
            <person name="Joshu C."/>
            <person name="Antonoiu B."/>
            <person name="Zidanic M."/>
            <person name="Strong C."/>
            <person name="Sun H."/>
            <person name="Lamar B."/>
            <person name="Yordan C."/>
            <person name="Ma P."/>
            <person name="Zhong J."/>
            <person name="Preston R."/>
            <person name="Vil D."/>
            <person name="Shekher M."/>
            <person name="Matero A."/>
            <person name="Shah R."/>
            <person name="Swaby I.K."/>
            <person name="O'Shaughnessy A."/>
            <person name="Rodriguez M."/>
            <person name="Hoffman J."/>
            <person name="Till S."/>
            <person name="Granat S."/>
            <person name="Shohdy N."/>
            <person name="Hasegawa A."/>
            <person name="Hameed A."/>
            <person name="Lodhi M."/>
            <person name="Johnson A."/>
            <person name="Chen E."/>
            <person name="Marra M.A."/>
            <person name="Martienssen R."/>
            <person name="McCombie W.R."/>
        </authorList>
    </citation>
    <scope>NUCLEOTIDE SEQUENCE [LARGE SCALE GENOMIC DNA]</scope>
    <source>
        <strain>cv. Columbia</strain>
    </source>
</reference>
<reference key="2">
    <citation type="journal article" date="2017" name="Plant J.">
        <title>Araport11: a complete reannotation of the Arabidopsis thaliana reference genome.</title>
        <authorList>
            <person name="Cheng C.Y."/>
            <person name="Krishnakumar V."/>
            <person name="Chan A.P."/>
            <person name="Thibaud-Nissen F."/>
            <person name="Schobel S."/>
            <person name="Town C.D."/>
        </authorList>
    </citation>
    <scope>GENOME REANNOTATION</scope>
    <source>
        <strain>cv. Columbia</strain>
    </source>
</reference>
<reference key="3">
    <citation type="journal article" date="2003" name="Science">
        <title>Empirical analysis of transcriptional activity in the Arabidopsis genome.</title>
        <authorList>
            <person name="Yamada K."/>
            <person name="Lim J."/>
            <person name="Dale J.M."/>
            <person name="Chen H."/>
            <person name="Shinn P."/>
            <person name="Palm C.J."/>
            <person name="Southwick A.M."/>
            <person name="Wu H.C."/>
            <person name="Kim C.J."/>
            <person name="Nguyen M."/>
            <person name="Pham P.K."/>
            <person name="Cheuk R.F."/>
            <person name="Karlin-Newmann G."/>
            <person name="Liu S.X."/>
            <person name="Lam B."/>
            <person name="Sakano H."/>
            <person name="Wu T."/>
            <person name="Yu G."/>
            <person name="Miranda M."/>
            <person name="Quach H.L."/>
            <person name="Tripp M."/>
            <person name="Chang C.H."/>
            <person name="Lee J.M."/>
            <person name="Toriumi M.J."/>
            <person name="Chan M.M."/>
            <person name="Tang C.C."/>
            <person name="Onodera C.S."/>
            <person name="Deng J.M."/>
            <person name="Akiyama K."/>
            <person name="Ansari Y."/>
            <person name="Arakawa T."/>
            <person name="Banh J."/>
            <person name="Banno F."/>
            <person name="Bowser L."/>
            <person name="Brooks S.Y."/>
            <person name="Carninci P."/>
            <person name="Chao Q."/>
            <person name="Choy N."/>
            <person name="Enju A."/>
            <person name="Goldsmith A.D."/>
            <person name="Gurjal M."/>
            <person name="Hansen N.F."/>
            <person name="Hayashizaki Y."/>
            <person name="Johnson-Hopson C."/>
            <person name="Hsuan V.W."/>
            <person name="Iida K."/>
            <person name="Karnes M."/>
            <person name="Khan S."/>
            <person name="Koesema E."/>
            <person name="Ishida J."/>
            <person name="Jiang P.X."/>
            <person name="Jones T."/>
            <person name="Kawai J."/>
            <person name="Kamiya A."/>
            <person name="Meyers C."/>
            <person name="Nakajima M."/>
            <person name="Narusaka M."/>
            <person name="Seki M."/>
            <person name="Sakurai T."/>
            <person name="Satou M."/>
            <person name="Tamse R."/>
            <person name="Vaysberg M."/>
            <person name="Wallender E.K."/>
            <person name="Wong C."/>
            <person name="Yamamura Y."/>
            <person name="Yuan S."/>
            <person name="Shinozaki K."/>
            <person name="Davis R.W."/>
            <person name="Theologis A."/>
            <person name="Ecker J.R."/>
        </authorList>
    </citation>
    <scope>NUCLEOTIDE SEQUENCE [LARGE SCALE MRNA]</scope>
    <source>
        <strain>cv. Columbia</strain>
    </source>
</reference>
<reference key="4">
    <citation type="journal article" date="2002" name="Genome Biol.">
        <title>Evaluation and classification of RING-finger domains encoded by the Arabidopsis genome.</title>
        <authorList>
            <person name="Kosarev P."/>
            <person name="Mayer K.F.X."/>
            <person name="Hardtke C.S."/>
        </authorList>
    </citation>
    <scope>GENE FAMILY ORGANIZATION</scope>
</reference>
<reference key="5">
    <citation type="journal article" date="2004" name="Genetics">
        <title>Isolation and gene expression analysis of Arabidopsis thaliana mutants with constitutive expression of ATL2, an early elicitor-response RING-H2 zinc-finger gene.</title>
        <authorList>
            <person name="Serrano M."/>
            <person name="Guzman P."/>
        </authorList>
    </citation>
    <scope>IDENTIFICATION</scope>
</reference>
<reference key="6">
    <citation type="journal article" date="2006" name="J. Mol. Evol.">
        <title>The ATL gene family from Arabidopsis thaliana and Oryza sativa comprises a large number of putative ubiquitin ligases of the RING-H2 type.</title>
        <authorList>
            <person name="Serrano M."/>
            <person name="Parra S."/>
            <person name="Alcaraz L.D."/>
            <person name="Guzman P."/>
        </authorList>
    </citation>
    <scope>NOMENCLATURE</scope>
    <scope>GENE FAMILY ORGANIZATION</scope>
</reference>
<sequence>MKFSRENMKWVFPEIKTTQNFLSPSSLPQEPPLSLRSSANFDLNSKISPSILLIIIILSIIFFISGLLHLLVRFLLTPSSRDREDYFDNVTALQGQLQQLFHLHDSGVDQSFIDTLPVFHYKSIIGLKNYPFDCAVCLCEFETEDKLRLLPKCSHAFHMDCIDTWLLSHSTCPLCRSSLLSDLSSHQDPRSSFLLVLESASDHSSREIGGDRDSAACVAANDDIDVSSAHLGLVGNNDLGSTRIDSGHGDQYLDGELGGSVGKVVPFSVKLGKFRNIDIGEGTSSNNNIGNSSSLDERRCFSMGSYEYIMDEETTLKVHVSTKKQSSKNRGLPGHRTAMSECGFDPTGRLKFSGSGSMRIVEEAAEKNVVERESFSVSKIWLRGKKEKHSKVQGKEDSSLVSSSSGRAFSFRLSNQRNHPDAMIESGCEEDNQKCENSESLETKTPSFARRTMLWLAGRQNKVVHSSSSTNV</sequence>
<keyword id="KW-0472">Membrane</keyword>
<keyword id="KW-0479">Metal-binding</keyword>
<keyword id="KW-1185">Reference proteome</keyword>
<keyword id="KW-0808">Transferase</keyword>
<keyword id="KW-0812">Transmembrane</keyword>
<keyword id="KW-1133">Transmembrane helix</keyword>
<keyword id="KW-0833">Ubl conjugation pathway</keyword>
<keyword id="KW-0862">Zinc</keyword>
<keyword id="KW-0863">Zinc-finger</keyword>
<gene>
    <name type="primary">ATL13</name>
    <name type="ordered locus">At4g30400</name>
    <name type="ORF">F17I23.260</name>
</gene>
<protein>
    <recommendedName>
        <fullName>RING-H2 finger protein ATL13</fullName>
        <ecNumber evidence="5">2.3.2.27</ecNumber>
    </recommendedName>
    <alternativeName>
        <fullName evidence="5">RING-type E3 ubiquitin transferase ATL13</fullName>
    </alternativeName>
</protein>
<feature type="chain" id="PRO_0000055804" description="RING-H2 finger protein ATL13">
    <location>
        <begin position="1"/>
        <end position="472"/>
    </location>
</feature>
<feature type="transmembrane region" description="Helical" evidence="2">
    <location>
        <begin position="51"/>
        <end position="71"/>
    </location>
</feature>
<feature type="zinc finger region" description="RING-type; atypical" evidence="3">
    <location>
        <begin position="134"/>
        <end position="176"/>
    </location>
</feature>
<feature type="region of interest" description="Disordered" evidence="4">
    <location>
        <begin position="320"/>
        <end position="340"/>
    </location>
</feature>
<feature type="sequence conflict" description="In Ref. 3; AAL06848/AAM65361." evidence="5" ref="3">
    <original>S</original>
    <variation>P</variation>
    <location>
        <position position="79"/>
    </location>
</feature>